<name>RUTE_ECO8A</name>
<comment type="function">
    <text evidence="1">May reduce toxic product malonic semialdehyde to 3-hydroxypropionic acid, which is excreted.</text>
</comment>
<comment type="catalytic activity">
    <reaction evidence="1">
        <text>3-hydroxypropanoate + NADP(+) = 3-oxopropanoate + NADPH + H(+)</text>
        <dbReference type="Rhea" id="RHEA:26438"/>
        <dbReference type="ChEBI" id="CHEBI:15378"/>
        <dbReference type="ChEBI" id="CHEBI:16510"/>
        <dbReference type="ChEBI" id="CHEBI:33190"/>
        <dbReference type="ChEBI" id="CHEBI:57783"/>
        <dbReference type="ChEBI" id="CHEBI:58349"/>
        <dbReference type="EC" id="1.1.1.298"/>
    </reaction>
</comment>
<comment type="cofactor">
    <cofactor evidence="1">
        <name>FMN</name>
        <dbReference type="ChEBI" id="CHEBI:58210"/>
    </cofactor>
</comment>
<comment type="induction">
    <text evidence="1">Up-regulated by the nitrogen regulatory protein C (NtrC also called GlnG) and repressed by RutR.</text>
</comment>
<comment type="similarity">
    <text evidence="1">Belongs to the nitroreductase family. HadB/RutE subfamily.</text>
</comment>
<proteinExistence type="inferred from homology"/>
<organism>
    <name type="scientific">Escherichia coli O8 (strain IAI1)</name>
    <dbReference type="NCBI Taxonomy" id="585034"/>
    <lineage>
        <taxon>Bacteria</taxon>
        <taxon>Pseudomonadati</taxon>
        <taxon>Pseudomonadota</taxon>
        <taxon>Gammaproteobacteria</taxon>
        <taxon>Enterobacterales</taxon>
        <taxon>Enterobacteriaceae</taxon>
        <taxon>Escherichia</taxon>
    </lineage>
</organism>
<reference key="1">
    <citation type="journal article" date="2009" name="PLoS Genet.">
        <title>Organised genome dynamics in the Escherichia coli species results in highly diverse adaptive paths.</title>
        <authorList>
            <person name="Touchon M."/>
            <person name="Hoede C."/>
            <person name="Tenaillon O."/>
            <person name="Barbe V."/>
            <person name="Baeriswyl S."/>
            <person name="Bidet P."/>
            <person name="Bingen E."/>
            <person name="Bonacorsi S."/>
            <person name="Bouchier C."/>
            <person name="Bouvet O."/>
            <person name="Calteau A."/>
            <person name="Chiapello H."/>
            <person name="Clermont O."/>
            <person name="Cruveiller S."/>
            <person name="Danchin A."/>
            <person name="Diard M."/>
            <person name="Dossat C."/>
            <person name="Karoui M.E."/>
            <person name="Frapy E."/>
            <person name="Garry L."/>
            <person name="Ghigo J.M."/>
            <person name="Gilles A.M."/>
            <person name="Johnson J."/>
            <person name="Le Bouguenec C."/>
            <person name="Lescat M."/>
            <person name="Mangenot S."/>
            <person name="Martinez-Jehanne V."/>
            <person name="Matic I."/>
            <person name="Nassif X."/>
            <person name="Oztas S."/>
            <person name="Petit M.A."/>
            <person name="Pichon C."/>
            <person name="Rouy Z."/>
            <person name="Ruf C.S."/>
            <person name="Schneider D."/>
            <person name="Tourret J."/>
            <person name="Vacherie B."/>
            <person name="Vallenet D."/>
            <person name="Medigue C."/>
            <person name="Rocha E.P.C."/>
            <person name="Denamur E."/>
        </authorList>
    </citation>
    <scope>NUCLEOTIDE SEQUENCE [LARGE SCALE GENOMIC DNA]</scope>
    <source>
        <strain>IAI1</strain>
    </source>
</reference>
<keyword id="KW-0285">Flavoprotein</keyword>
<keyword id="KW-0288">FMN</keyword>
<keyword id="KW-0520">NAD</keyword>
<keyword id="KW-0521">NADP</keyword>
<keyword id="KW-0560">Oxidoreductase</keyword>
<sequence>MNEAVSPGALSTLFTDARTHNGWRETPVSDETLREIYALMKWGPTSANCSPARIVFIRTAEGKERLRPALSSGNLQKTLTAPVTAIVAWDSEFYERLPQLFPHGDARSWFTSSPQLAEETAFRNSSMQAAYLIVACRALGLDTGPMSGFDRQHVDDAFFAGSTLKSNLLINIGYGDSSKLFARLPRLSFEEACGLL</sequence>
<gene>
    <name evidence="1" type="primary">rutE</name>
    <name type="ordered locus">ECIAI1_1053</name>
</gene>
<feature type="chain" id="PRO_1000138692" description="Probable malonic semialdehyde reductase RutE">
    <location>
        <begin position="1"/>
        <end position="196"/>
    </location>
</feature>
<evidence type="ECO:0000255" key="1">
    <source>
        <dbReference type="HAMAP-Rule" id="MF_01204"/>
    </source>
</evidence>
<accession>B7M8Z3</accession>
<dbReference type="EC" id="1.1.1.298" evidence="1"/>
<dbReference type="EMBL" id="CU928160">
    <property type="protein sequence ID" value="CAQ97917.1"/>
    <property type="molecule type" value="Genomic_DNA"/>
</dbReference>
<dbReference type="RefSeq" id="WP_001001171.1">
    <property type="nucleotide sequence ID" value="NC_011741.1"/>
</dbReference>
<dbReference type="SMR" id="B7M8Z3"/>
<dbReference type="KEGG" id="ecr:ECIAI1_1053"/>
<dbReference type="HOGENOM" id="CLU_084441_0_0_6"/>
<dbReference type="GO" id="GO:0035527">
    <property type="term" value="F:3-hydroxypropionate dehydrogenase (NADP+) activity"/>
    <property type="evidence" value="ECO:0007669"/>
    <property type="project" value="UniProtKB-UniRule"/>
</dbReference>
<dbReference type="GO" id="GO:0019740">
    <property type="term" value="P:nitrogen utilization"/>
    <property type="evidence" value="ECO:0007669"/>
    <property type="project" value="UniProtKB-UniRule"/>
</dbReference>
<dbReference type="GO" id="GO:0006212">
    <property type="term" value="P:uracil catabolic process"/>
    <property type="evidence" value="ECO:0007669"/>
    <property type="project" value="UniProtKB-UniRule"/>
</dbReference>
<dbReference type="CDD" id="cd02148">
    <property type="entry name" value="RutE-like"/>
    <property type="match status" value="1"/>
</dbReference>
<dbReference type="FunFam" id="3.40.109.10:FF:000003">
    <property type="entry name" value="Probable malonic semialdehyde reductase RutE"/>
    <property type="match status" value="1"/>
</dbReference>
<dbReference type="Gene3D" id="3.40.109.10">
    <property type="entry name" value="NADH Oxidase"/>
    <property type="match status" value="1"/>
</dbReference>
<dbReference type="HAMAP" id="MF_01204">
    <property type="entry name" value="Oxidoreductase_RutE_HadB"/>
    <property type="match status" value="1"/>
</dbReference>
<dbReference type="InterPro" id="IPR029479">
    <property type="entry name" value="Nitroreductase"/>
</dbReference>
<dbReference type="InterPro" id="IPR000415">
    <property type="entry name" value="Nitroreductase-like"/>
</dbReference>
<dbReference type="InterPro" id="IPR050461">
    <property type="entry name" value="Nitroreductase_HadB/RutE"/>
</dbReference>
<dbReference type="InterPro" id="IPR023936">
    <property type="entry name" value="RutE-like"/>
</dbReference>
<dbReference type="NCBIfam" id="NF003768">
    <property type="entry name" value="PRK05365.1"/>
    <property type="match status" value="1"/>
</dbReference>
<dbReference type="PANTHER" id="PTHR43543">
    <property type="entry name" value="MALONIC SEMIALDEHYDE REDUCTASE RUTE-RELATED"/>
    <property type="match status" value="1"/>
</dbReference>
<dbReference type="PANTHER" id="PTHR43543:SF1">
    <property type="entry name" value="MALONIC SEMIALDEHYDE REDUCTASE RUTE-RELATED"/>
    <property type="match status" value="1"/>
</dbReference>
<dbReference type="Pfam" id="PF00881">
    <property type="entry name" value="Nitroreductase"/>
    <property type="match status" value="1"/>
</dbReference>
<dbReference type="SUPFAM" id="SSF55469">
    <property type="entry name" value="FMN-dependent nitroreductase-like"/>
    <property type="match status" value="1"/>
</dbReference>
<protein>
    <recommendedName>
        <fullName evidence="1">Probable malonic semialdehyde reductase RutE</fullName>
        <ecNumber evidence="1">1.1.1.298</ecNumber>
    </recommendedName>
</protein>